<gene>
    <name type="primary">spp-11</name>
    <name type="ORF">T25D10.3</name>
</gene>
<sequence length="394" mass="43473">MSVFRFLLFLSLLVGSNAFVKPQYNVTGQIDSALQRFFGITLPSLKIPDLLNPDKKRNPPSVGQLKKTSFPLCNVNLPPIFFTISLFRIKLPNLIPTALPVIKLPTIKIPNILPTLPTIKVPTIKIPDIIPITLPTIKIPEVVPTNLPTVEIPHFIPKTLPTVKIPNIIPTNFPTIETPDIIPKILPTIKIPEIIPLTLPTVKIPDIIPITLPTIKIPEIVPTKLPTVEVPDTIPKTLPTTKIPDIVPITSPTVKIPQIIPTIKIPDIIPKNLSTLGPIKLPTIKLPTLPHILPTKSPKPTPSHKGNMVCDICEKVIGVLTTRLLEIIQKFRVEADKFLTKLCTSLTSNPKTLTVGTMCVMFKGNIMDTIFKGFDGLKKNLEPVSFCKHVPFCK</sequence>
<protein>
    <recommendedName>
        <fullName>Saposin-like protein 11</fullName>
    </recommendedName>
</protein>
<keyword id="KW-1015">Disulfide bond</keyword>
<keyword id="KW-0325">Glycoprotein</keyword>
<keyword id="KW-1185">Reference proteome</keyword>
<keyword id="KW-0732">Signal</keyword>
<organism>
    <name type="scientific">Caenorhabditis elegans</name>
    <dbReference type="NCBI Taxonomy" id="6239"/>
    <lineage>
        <taxon>Eukaryota</taxon>
        <taxon>Metazoa</taxon>
        <taxon>Ecdysozoa</taxon>
        <taxon>Nematoda</taxon>
        <taxon>Chromadorea</taxon>
        <taxon>Rhabditida</taxon>
        <taxon>Rhabditina</taxon>
        <taxon>Rhabditomorpha</taxon>
        <taxon>Rhabditoidea</taxon>
        <taxon>Rhabditidae</taxon>
        <taxon>Peloderinae</taxon>
        <taxon>Caenorhabditis</taxon>
    </lineage>
</organism>
<name>SPP11_CAEEL</name>
<reference key="1">
    <citation type="journal article" date="1998" name="Science">
        <title>Genome sequence of the nematode C. elegans: a platform for investigating biology.</title>
        <authorList>
            <consortium name="The C. elegans sequencing consortium"/>
        </authorList>
    </citation>
    <scope>NUCLEOTIDE SEQUENCE [LARGE SCALE GENOMIC DNA]</scope>
    <source>
        <strain>Bristol N2</strain>
    </source>
</reference>
<accession>Q10018</accession>
<evidence type="ECO:0000255" key="1"/>
<evidence type="ECO:0000255" key="2">
    <source>
        <dbReference type="PROSITE-ProRule" id="PRU00415"/>
    </source>
</evidence>
<proteinExistence type="inferred from homology"/>
<feature type="signal peptide" evidence="1">
    <location>
        <begin position="1"/>
        <end position="18"/>
    </location>
</feature>
<feature type="chain" id="PRO_0000031672" description="Saposin-like protein 11">
    <location>
        <begin position="19"/>
        <end position="394"/>
    </location>
</feature>
<feature type="domain" description="Saposin B-type" evidence="2">
    <location>
        <begin position="306"/>
        <end position="394"/>
    </location>
</feature>
<feature type="glycosylation site" description="N-linked (GlcNAc...) asparagine" evidence="2">
    <location>
        <position position="25"/>
    </location>
</feature>
<feature type="glycosylation site" description="N-linked (GlcNAc...) asparagine" evidence="2">
    <location>
        <position position="272"/>
    </location>
</feature>
<feature type="disulfide bond" evidence="2">
    <location>
        <begin position="310"/>
        <end position="393"/>
    </location>
</feature>
<feature type="disulfide bond" evidence="2">
    <location>
        <begin position="313"/>
        <end position="387"/>
    </location>
</feature>
<feature type="disulfide bond" evidence="2">
    <location>
        <begin position="343"/>
        <end position="359"/>
    </location>
</feature>
<dbReference type="EMBL" id="FO081506">
    <property type="protein sequence ID" value="CCD72075.1"/>
    <property type="molecule type" value="Genomic_DNA"/>
</dbReference>
<dbReference type="PIR" id="T16940">
    <property type="entry name" value="T16940"/>
</dbReference>
<dbReference type="RefSeq" id="NP_495291.2">
    <property type="nucleotide sequence ID" value="NM_062890.4"/>
</dbReference>
<dbReference type="FunCoup" id="Q10018">
    <property type="interactions" value="271"/>
</dbReference>
<dbReference type="STRING" id="6239.T25D10.3b.1"/>
<dbReference type="GlyCosmos" id="Q10018">
    <property type="glycosylation" value="2 sites, No reported glycans"/>
</dbReference>
<dbReference type="PaxDb" id="6239-T25D10.3"/>
<dbReference type="PeptideAtlas" id="Q10018"/>
<dbReference type="EnsemblMetazoa" id="T25D10.3a.1">
    <property type="protein sequence ID" value="T25D10.3a.1"/>
    <property type="gene ID" value="WBGene00004996"/>
</dbReference>
<dbReference type="UCSC" id="T25D10.3">
    <property type="organism name" value="c. elegans"/>
</dbReference>
<dbReference type="AGR" id="WB:WBGene00004996"/>
<dbReference type="WormBase" id="T25D10.3a">
    <property type="protein sequence ID" value="CE52758"/>
    <property type="gene ID" value="WBGene00004996"/>
    <property type="gene designation" value="spp-11"/>
</dbReference>
<dbReference type="eggNOG" id="ENOG502SG84">
    <property type="taxonomic scope" value="Eukaryota"/>
</dbReference>
<dbReference type="HOGENOM" id="CLU_700635_0_0_1"/>
<dbReference type="InParanoid" id="Q10018"/>
<dbReference type="OMA" id="CKHVPFC"/>
<dbReference type="PRO" id="PR:Q10018"/>
<dbReference type="Proteomes" id="UP000001940">
    <property type="component" value="Chromosome II"/>
</dbReference>
<dbReference type="Bgee" id="WBGene00004996">
    <property type="expression patterns" value="Expressed in larva"/>
</dbReference>
<dbReference type="ExpressionAtlas" id="Q10018">
    <property type="expression patterns" value="baseline and differential"/>
</dbReference>
<dbReference type="InterPro" id="IPR011001">
    <property type="entry name" value="Saposin-like"/>
</dbReference>
<dbReference type="InterPro" id="IPR008139">
    <property type="entry name" value="SaposinB_dom"/>
</dbReference>
<dbReference type="SMART" id="SM00741">
    <property type="entry name" value="SapB"/>
    <property type="match status" value="1"/>
</dbReference>
<dbReference type="SUPFAM" id="SSF47862">
    <property type="entry name" value="Saposin"/>
    <property type="match status" value="1"/>
</dbReference>
<dbReference type="PROSITE" id="PS50015">
    <property type="entry name" value="SAP_B"/>
    <property type="match status" value="1"/>
</dbReference>